<dbReference type="EMBL" id="AP009044">
    <property type="protein sequence ID" value="BAF54434.1"/>
    <property type="molecule type" value="Genomic_DNA"/>
</dbReference>
<dbReference type="RefSeq" id="WP_003858721.1">
    <property type="nucleotide sequence ID" value="NC_009342.1"/>
</dbReference>
<dbReference type="SMR" id="A4QDY2"/>
<dbReference type="GeneID" id="1019355"/>
<dbReference type="KEGG" id="cgt:cgR_1443"/>
<dbReference type="HOGENOM" id="CLU_169643_4_2_11"/>
<dbReference type="PhylomeDB" id="A4QDY2"/>
<dbReference type="Proteomes" id="UP000006698">
    <property type="component" value="Chromosome"/>
</dbReference>
<dbReference type="GO" id="GO:0022625">
    <property type="term" value="C:cytosolic large ribosomal subunit"/>
    <property type="evidence" value="ECO:0007669"/>
    <property type="project" value="TreeGrafter"/>
</dbReference>
<dbReference type="GO" id="GO:0003735">
    <property type="term" value="F:structural constituent of ribosome"/>
    <property type="evidence" value="ECO:0007669"/>
    <property type="project" value="InterPro"/>
</dbReference>
<dbReference type="GO" id="GO:0006412">
    <property type="term" value="P:translation"/>
    <property type="evidence" value="ECO:0007669"/>
    <property type="project" value="UniProtKB-UniRule"/>
</dbReference>
<dbReference type="FunFam" id="4.10.410.60:FF:000001">
    <property type="entry name" value="50S ribosomal protein L35"/>
    <property type="match status" value="1"/>
</dbReference>
<dbReference type="Gene3D" id="4.10.410.60">
    <property type="match status" value="1"/>
</dbReference>
<dbReference type="HAMAP" id="MF_00514">
    <property type="entry name" value="Ribosomal_bL35"/>
    <property type="match status" value="1"/>
</dbReference>
<dbReference type="InterPro" id="IPR001706">
    <property type="entry name" value="Ribosomal_bL35"/>
</dbReference>
<dbReference type="InterPro" id="IPR021137">
    <property type="entry name" value="Ribosomal_bL35-like"/>
</dbReference>
<dbReference type="InterPro" id="IPR037229">
    <property type="entry name" value="Ribosomal_bL35_sf"/>
</dbReference>
<dbReference type="NCBIfam" id="TIGR00001">
    <property type="entry name" value="rpmI_bact"/>
    <property type="match status" value="1"/>
</dbReference>
<dbReference type="PANTHER" id="PTHR33343">
    <property type="entry name" value="54S RIBOSOMAL PROTEIN BL35M"/>
    <property type="match status" value="1"/>
</dbReference>
<dbReference type="PANTHER" id="PTHR33343:SF1">
    <property type="entry name" value="LARGE RIBOSOMAL SUBUNIT PROTEIN BL35M"/>
    <property type="match status" value="1"/>
</dbReference>
<dbReference type="Pfam" id="PF01632">
    <property type="entry name" value="Ribosomal_L35p"/>
    <property type="match status" value="1"/>
</dbReference>
<dbReference type="PRINTS" id="PR00064">
    <property type="entry name" value="RIBOSOMALL35"/>
</dbReference>
<dbReference type="SUPFAM" id="SSF143034">
    <property type="entry name" value="L35p-like"/>
    <property type="match status" value="1"/>
</dbReference>
<organism>
    <name type="scientific">Corynebacterium glutamicum (strain R)</name>
    <dbReference type="NCBI Taxonomy" id="340322"/>
    <lineage>
        <taxon>Bacteria</taxon>
        <taxon>Bacillati</taxon>
        <taxon>Actinomycetota</taxon>
        <taxon>Actinomycetes</taxon>
        <taxon>Mycobacteriales</taxon>
        <taxon>Corynebacteriaceae</taxon>
        <taxon>Corynebacterium</taxon>
    </lineage>
</organism>
<comment type="similarity">
    <text evidence="1">Belongs to the bacterial ribosomal protein bL35 family.</text>
</comment>
<proteinExistence type="inferred from homology"/>
<protein>
    <recommendedName>
        <fullName evidence="1">Large ribosomal subunit protein bL35</fullName>
    </recommendedName>
    <alternativeName>
        <fullName evidence="3">50S ribosomal protein L35</fullName>
    </alternativeName>
</protein>
<keyword id="KW-0687">Ribonucleoprotein</keyword>
<keyword id="KW-0689">Ribosomal protein</keyword>
<name>RL35_CORGB</name>
<gene>
    <name evidence="1" type="primary">rpmI</name>
    <name type="ordered locus">cgR_1443</name>
</gene>
<feature type="chain" id="PRO_1000050685" description="Large ribosomal subunit protein bL35">
    <location>
        <begin position="1"/>
        <end position="64"/>
    </location>
</feature>
<feature type="region of interest" description="Disordered" evidence="2">
    <location>
        <begin position="1"/>
        <end position="29"/>
    </location>
</feature>
<feature type="compositionally biased region" description="Basic residues" evidence="2">
    <location>
        <begin position="1"/>
        <end position="14"/>
    </location>
</feature>
<evidence type="ECO:0000255" key="1">
    <source>
        <dbReference type="HAMAP-Rule" id="MF_00514"/>
    </source>
</evidence>
<evidence type="ECO:0000256" key="2">
    <source>
        <dbReference type="SAM" id="MobiDB-lite"/>
    </source>
</evidence>
<evidence type="ECO:0000305" key="3"/>
<accession>A4QDY2</accession>
<sequence>MKNKTHKGTAKRVKVTGSGKLVREQANRRHLLEGKSSTRTRRLKGIVEVDKADTKRMKRLLGKA</sequence>
<reference key="1">
    <citation type="journal article" date="2007" name="Microbiology">
        <title>Comparative analysis of the Corynebacterium glutamicum group and complete genome sequence of strain R.</title>
        <authorList>
            <person name="Yukawa H."/>
            <person name="Omumasaba C.A."/>
            <person name="Nonaka H."/>
            <person name="Kos P."/>
            <person name="Okai N."/>
            <person name="Suzuki N."/>
            <person name="Suda M."/>
            <person name="Tsuge Y."/>
            <person name="Watanabe J."/>
            <person name="Ikeda Y."/>
            <person name="Vertes A.A."/>
            <person name="Inui M."/>
        </authorList>
    </citation>
    <scope>NUCLEOTIDE SEQUENCE [LARGE SCALE GENOMIC DNA]</scope>
    <source>
        <strain>R</strain>
    </source>
</reference>